<keyword id="KW-0012">Acyltransferase</keyword>
<keyword id="KW-0028">Amino-acid biosynthesis</keyword>
<keyword id="KW-0963">Cytoplasm</keyword>
<keyword id="KW-0486">Methionine biosynthesis</keyword>
<keyword id="KW-0808">Transferase</keyword>
<accession>B2IR95</accession>
<reference key="1">
    <citation type="journal article" date="2009" name="BMC Genomics">
        <title>Genome evolution driven by host adaptations results in a more virulent and antimicrobial-resistant Streptococcus pneumoniae serotype 14.</title>
        <authorList>
            <person name="Ding F."/>
            <person name="Tang P."/>
            <person name="Hsu M.-H."/>
            <person name="Cui P."/>
            <person name="Hu S."/>
            <person name="Yu J."/>
            <person name="Chiu C.-H."/>
        </authorList>
    </citation>
    <scope>NUCLEOTIDE SEQUENCE [LARGE SCALE GENOMIC DNA]</scope>
    <source>
        <strain>CGSP14</strain>
    </source>
</reference>
<proteinExistence type="inferred from homology"/>
<evidence type="ECO:0000255" key="1">
    <source>
        <dbReference type="HAMAP-Rule" id="MF_00295"/>
    </source>
</evidence>
<name>METAA_STRPS</name>
<protein>
    <recommendedName>
        <fullName evidence="1">Homoserine O-acetyltransferase</fullName>
        <shortName evidence="1">HAT</shortName>
        <ecNumber evidence="1">2.3.1.31</ecNumber>
    </recommendedName>
    <alternativeName>
        <fullName evidence="1">Homoserine transacetylase</fullName>
        <shortName evidence="1">HTA</shortName>
    </alternativeName>
</protein>
<comment type="function">
    <text evidence="1">Transfers an acetyl group from acetyl-CoA to L-homoserine, forming acetyl-L-homoserine.</text>
</comment>
<comment type="catalytic activity">
    <reaction evidence="1">
        <text>L-homoserine + acetyl-CoA = O-acetyl-L-homoserine + CoA</text>
        <dbReference type="Rhea" id="RHEA:13701"/>
        <dbReference type="ChEBI" id="CHEBI:57287"/>
        <dbReference type="ChEBI" id="CHEBI:57288"/>
        <dbReference type="ChEBI" id="CHEBI:57476"/>
        <dbReference type="ChEBI" id="CHEBI:57716"/>
        <dbReference type="EC" id="2.3.1.31"/>
    </reaction>
</comment>
<comment type="pathway">
    <text evidence="1">Amino-acid biosynthesis; L-methionine biosynthesis via de novo pathway; O-acetyl-L-homoserine from L-homoserine: step 1/1.</text>
</comment>
<comment type="subcellular location">
    <subcellularLocation>
        <location evidence="1">Cytoplasm</location>
    </subcellularLocation>
</comment>
<comment type="similarity">
    <text evidence="1">Belongs to the MetA family.</text>
</comment>
<organism>
    <name type="scientific">Streptococcus pneumoniae (strain CGSP14)</name>
    <dbReference type="NCBI Taxonomy" id="516950"/>
    <lineage>
        <taxon>Bacteria</taxon>
        <taxon>Bacillati</taxon>
        <taxon>Bacillota</taxon>
        <taxon>Bacilli</taxon>
        <taxon>Lactobacillales</taxon>
        <taxon>Streptococcaceae</taxon>
        <taxon>Streptococcus</taxon>
    </lineage>
</organism>
<gene>
    <name evidence="1" type="primary">metAA</name>
    <name type="ordered locus">SPCG_1562</name>
</gene>
<sequence>MPIRIDKKLPAVEILRTENIFVMDDQRAAHQDIRPLKILILNLMPQKMVTETQLLRHLANTPLQLDIDFLYMESHRSKTTRSEHMETFYKTFPEVKDEYFDGMIITGAPVEHLPFEEVDYWEEFRQMLEWSKTHVYSTLHICWGAQAGLYLRYGVEKYQMDSKLSGIYPQDTLKEGHLLFRGFDDSYVSPHSRHTEISKEEVLNKTNLEILSEGPQVGVSILASRDLREIYSFGHLEYDRDTLAKEYFRDRDAGFDPHIPENYFKDDDVNQVPCLCWSSSAALFFSNWVNHAVYQETPFDWRKIEDDASAYGYL</sequence>
<feature type="chain" id="PRO_1000115199" description="Homoserine O-acetyltransferase">
    <location>
        <begin position="1"/>
        <end position="314"/>
    </location>
</feature>
<feature type="active site" description="Acyl-thioester intermediate" evidence="1">
    <location>
        <position position="142"/>
    </location>
</feature>
<feature type="active site" description="Proton acceptor" evidence="1">
    <location>
        <position position="235"/>
    </location>
</feature>
<feature type="active site" evidence="1">
    <location>
        <position position="237"/>
    </location>
</feature>
<feature type="binding site" evidence="1">
    <location>
        <position position="163"/>
    </location>
    <ligand>
        <name>substrate</name>
    </ligand>
</feature>
<feature type="binding site" evidence="1">
    <location>
        <position position="192"/>
    </location>
    <ligand>
        <name>substrate</name>
    </ligand>
</feature>
<feature type="binding site" evidence="1">
    <location>
        <position position="249"/>
    </location>
    <ligand>
        <name>substrate</name>
    </ligand>
</feature>
<feature type="site" description="Important for acyl-CoA specificity" evidence="1">
    <location>
        <position position="111"/>
    </location>
</feature>
<feature type="site" description="Important for substrate specificity" evidence="1">
    <location>
        <position position="192"/>
    </location>
</feature>
<dbReference type="EC" id="2.3.1.31" evidence="1"/>
<dbReference type="EMBL" id="CP001033">
    <property type="protein sequence ID" value="ACB90814.1"/>
    <property type="molecule type" value="Genomic_DNA"/>
</dbReference>
<dbReference type="SMR" id="B2IR95"/>
<dbReference type="KEGG" id="spw:SPCG_1562"/>
<dbReference type="HOGENOM" id="CLU_057851_0_1_9"/>
<dbReference type="UniPathway" id="UPA00051">
    <property type="reaction ID" value="UER00074"/>
</dbReference>
<dbReference type="GO" id="GO:0005737">
    <property type="term" value="C:cytoplasm"/>
    <property type="evidence" value="ECO:0007669"/>
    <property type="project" value="UniProtKB-SubCell"/>
</dbReference>
<dbReference type="GO" id="GO:0004414">
    <property type="term" value="F:homoserine O-acetyltransferase activity"/>
    <property type="evidence" value="ECO:0007669"/>
    <property type="project" value="UniProtKB-EC"/>
</dbReference>
<dbReference type="GO" id="GO:0008899">
    <property type="term" value="F:homoserine O-succinyltransferase activity"/>
    <property type="evidence" value="ECO:0007669"/>
    <property type="project" value="UniProtKB-UniRule"/>
</dbReference>
<dbReference type="GO" id="GO:0019281">
    <property type="term" value="P:L-methionine biosynthetic process from homoserine via O-succinyl-L-homoserine and cystathionine"/>
    <property type="evidence" value="ECO:0007669"/>
    <property type="project" value="InterPro"/>
</dbReference>
<dbReference type="CDD" id="cd03131">
    <property type="entry name" value="GATase1_HTS"/>
    <property type="match status" value="1"/>
</dbReference>
<dbReference type="FunFam" id="3.40.50.880:FF:000004">
    <property type="entry name" value="Homoserine O-succinyltransferase"/>
    <property type="match status" value="1"/>
</dbReference>
<dbReference type="Gene3D" id="3.40.50.880">
    <property type="match status" value="1"/>
</dbReference>
<dbReference type="HAMAP" id="MF_00295">
    <property type="entry name" value="MetA_acyltransf"/>
    <property type="match status" value="1"/>
</dbReference>
<dbReference type="InterPro" id="IPR029062">
    <property type="entry name" value="Class_I_gatase-like"/>
</dbReference>
<dbReference type="InterPro" id="IPR005697">
    <property type="entry name" value="HST_MetA"/>
</dbReference>
<dbReference type="InterPro" id="IPR033752">
    <property type="entry name" value="MetA_family"/>
</dbReference>
<dbReference type="NCBIfam" id="TIGR01001">
    <property type="entry name" value="metA"/>
    <property type="match status" value="1"/>
</dbReference>
<dbReference type="PANTHER" id="PTHR20919">
    <property type="entry name" value="HOMOSERINE O-SUCCINYLTRANSFERASE"/>
    <property type="match status" value="1"/>
</dbReference>
<dbReference type="PANTHER" id="PTHR20919:SF0">
    <property type="entry name" value="HOMOSERINE O-SUCCINYLTRANSFERASE"/>
    <property type="match status" value="1"/>
</dbReference>
<dbReference type="Pfam" id="PF04204">
    <property type="entry name" value="HTS"/>
    <property type="match status" value="1"/>
</dbReference>
<dbReference type="PIRSF" id="PIRSF000450">
    <property type="entry name" value="H_ser_succinyltr"/>
    <property type="match status" value="1"/>
</dbReference>
<dbReference type="SUPFAM" id="SSF52317">
    <property type="entry name" value="Class I glutamine amidotransferase-like"/>
    <property type="match status" value="1"/>
</dbReference>